<protein>
    <recommendedName>
        <fullName evidence="1">ATP synthase subunit beta</fullName>
        <ecNumber evidence="1">7.1.2.2</ecNumber>
    </recommendedName>
    <alternativeName>
        <fullName evidence="1">ATP synthase F1 sector subunit beta</fullName>
    </alternativeName>
    <alternativeName>
        <fullName evidence="1">F-ATPase subunit beta</fullName>
    </alternativeName>
</protein>
<keyword id="KW-0066">ATP synthesis</keyword>
<keyword id="KW-0067">ATP-binding</keyword>
<keyword id="KW-0997">Cell inner membrane</keyword>
<keyword id="KW-1003">Cell membrane</keyword>
<keyword id="KW-0139">CF(1)</keyword>
<keyword id="KW-0375">Hydrogen ion transport</keyword>
<keyword id="KW-0406">Ion transport</keyword>
<keyword id="KW-0472">Membrane</keyword>
<keyword id="KW-0547">Nucleotide-binding</keyword>
<keyword id="KW-1278">Translocase</keyword>
<keyword id="KW-0813">Transport</keyword>
<organism>
    <name type="scientific">Acinetobacter baylyi (strain ATCC 33305 / BD413 / ADP1)</name>
    <dbReference type="NCBI Taxonomy" id="62977"/>
    <lineage>
        <taxon>Bacteria</taxon>
        <taxon>Pseudomonadati</taxon>
        <taxon>Pseudomonadota</taxon>
        <taxon>Gammaproteobacteria</taxon>
        <taxon>Moraxellales</taxon>
        <taxon>Moraxellaceae</taxon>
        <taxon>Acinetobacter</taxon>
    </lineage>
</organism>
<name>ATPB_ACIAD</name>
<gene>
    <name evidence="1" type="primary">atpD</name>
    <name type="ordered locus">ACIAD0187</name>
</gene>
<accession>Q6FFK0</accession>
<proteinExistence type="inferred from homology"/>
<dbReference type="EC" id="7.1.2.2" evidence="1"/>
<dbReference type="EMBL" id="CR543861">
    <property type="protein sequence ID" value="CAG67157.1"/>
    <property type="molecule type" value="Genomic_DNA"/>
</dbReference>
<dbReference type="RefSeq" id="WP_004930535.1">
    <property type="nucleotide sequence ID" value="NC_005966.1"/>
</dbReference>
<dbReference type="SMR" id="Q6FFK0"/>
<dbReference type="STRING" id="202950.GCA_001485005_01917"/>
<dbReference type="GeneID" id="9384161"/>
<dbReference type="KEGG" id="aci:ACIAD0187"/>
<dbReference type="eggNOG" id="COG0055">
    <property type="taxonomic scope" value="Bacteria"/>
</dbReference>
<dbReference type="HOGENOM" id="CLU_022398_0_2_6"/>
<dbReference type="OrthoDB" id="9801639at2"/>
<dbReference type="BioCyc" id="ASP62977:ACIAD_RS00865-MONOMER"/>
<dbReference type="Proteomes" id="UP000000430">
    <property type="component" value="Chromosome"/>
</dbReference>
<dbReference type="GO" id="GO:0005886">
    <property type="term" value="C:plasma membrane"/>
    <property type="evidence" value="ECO:0007669"/>
    <property type="project" value="UniProtKB-SubCell"/>
</dbReference>
<dbReference type="GO" id="GO:0045259">
    <property type="term" value="C:proton-transporting ATP synthase complex"/>
    <property type="evidence" value="ECO:0007669"/>
    <property type="project" value="UniProtKB-KW"/>
</dbReference>
<dbReference type="GO" id="GO:0005524">
    <property type="term" value="F:ATP binding"/>
    <property type="evidence" value="ECO:0007669"/>
    <property type="project" value="UniProtKB-UniRule"/>
</dbReference>
<dbReference type="GO" id="GO:0016887">
    <property type="term" value="F:ATP hydrolysis activity"/>
    <property type="evidence" value="ECO:0007669"/>
    <property type="project" value="InterPro"/>
</dbReference>
<dbReference type="GO" id="GO:0046933">
    <property type="term" value="F:proton-transporting ATP synthase activity, rotational mechanism"/>
    <property type="evidence" value="ECO:0007669"/>
    <property type="project" value="UniProtKB-UniRule"/>
</dbReference>
<dbReference type="CDD" id="cd18110">
    <property type="entry name" value="ATP-synt_F1_beta_C"/>
    <property type="match status" value="1"/>
</dbReference>
<dbReference type="CDD" id="cd18115">
    <property type="entry name" value="ATP-synt_F1_beta_N"/>
    <property type="match status" value="1"/>
</dbReference>
<dbReference type="CDD" id="cd01133">
    <property type="entry name" value="F1-ATPase_beta_CD"/>
    <property type="match status" value="1"/>
</dbReference>
<dbReference type="FunFam" id="1.10.1140.10:FF:000001">
    <property type="entry name" value="ATP synthase subunit beta"/>
    <property type="match status" value="1"/>
</dbReference>
<dbReference type="FunFam" id="3.40.50.300:FF:000004">
    <property type="entry name" value="ATP synthase subunit beta"/>
    <property type="match status" value="1"/>
</dbReference>
<dbReference type="Gene3D" id="2.40.10.170">
    <property type="match status" value="1"/>
</dbReference>
<dbReference type="Gene3D" id="1.10.1140.10">
    <property type="entry name" value="Bovine Mitochondrial F1-atpase, Atp Synthase Beta Chain, Chain D, domain 3"/>
    <property type="match status" value="1"/>
</dbReference>
<dbReference type="Gene3D" id="3.40.50.300">
    <property type="entry name" value="P-loop containing nucleotide triphosphate hydrolases"/>
    <property type="match status" value="1"/>
</dbReference>
<dbReference type="HAMAP" id="MF_01347">
    <property type="entry name" value="ATP_synth_beta_bact"/>
    <property type="match status" value="1"/>
</dbReference>
<dbReference type="InterPro" id="IPR003593">
    <property type="entry name" value="AAA+_ATPase"/>
</dbReference>
<dbReference type="InterPro" id="IPR055190">
    <property type="entry name" value="ATP-synt_VA_C"/>
</dbReference>
<dbReference type="InterPro" id="IPR005722">
    <property type="entry name" value="ATP_synth_F1_bsu"/>
</dbReference>
<dbReference type="InterPro" id="IPR020003">
    <property type="entry name" value="ATPase_a/bsu_AS"/>
</dbReference>
<dbReference type="InterPro" id="IPR050053">
    <property type="entry name" value="ATPase_alpha/beta_chains"/>
</dbReference>
<dbReference type="InterPro" id="IPR004100">
    <property type="entry name" value="ATPase_F1/V1/A1_a/bsu_N"/>
</dbReference>
<dbReference type="InterPro" id="IPR036121">
    <property type="entry name" value="ATPase_F1/V1/A1_a/bsu_N_sf"/>
</dbReference>
<dbReference type="InterPro" id="IPR000194">
    <property type="entry name" value="ATPase_F1/V1/A1_a/bsu_nucl-bd"/>
</dbReference>
<dbReference type="InterPro" id="IPR024034">
    <property type="entry name" value="ATPase_F1/V1_b/a_C"/>
</dbReference>
<dbReference type="InterPro" id="IPR027417">
    <property type="entry name" value="P-loop_NTPase"/>
</dbReference>
<dbReference type="NCBIfam" id="TIGR01039">
    <property type="entry name" value="atpD"/>
    <property type="match status" value="1"/>
</dbReference>
<dbReference type="PANTHER" id="PTHR15184">
    <property type="entry name" value="ATP SYNTHASE"/>
    <property type="match status" value="1"/>
</dbReference>
<dbReference type="PANTHER" id="PTHR15184:SF71">
    <property type="entry name" value="ATP SYNTHASE SUBUNIT BETA, MITOCHONDRIAL"/>
    <property type="match status" value="1"/>
</dbReference>
<dbReference type="Pfam" id="PF00006">
    <property type="entry name" value="ATP-synt_ab"/>
    <property type="match status" value="1"/>
</dbReference>
<dbReference type="Pfam" id="PF02874">
    <property type="entry name" value="ATP-synt_ab_N"/>
    <property type="match status" value="1"/>
</dbReference>
<dbReference type="Pfam" id="PF22919">
    <property type="entry name" value="ATP-synt_VA_C"/>
    <property type="match status" value="1"/>
</dbReference>
<dbReference type="SMART" id="SM00382">
    <property type="entry name" value="AAA"/>
    <property type="match status" value="1"/>
</dbReference>
<dbReference type="SUPFAM" id="SSF47917">
    <property type="entry name" value="C-terminal domain of alpha and beta subunits of F1 ATP synthase"/>
    <property type="match status" value="1"/>
</dbReference>
<dbReference type="SUPFAM" id="SSF50615">
    <property type="entry name" value="N-terminal domain of alpha and beta subunits of F1 ATP synthase"/>
    <property type="match status" value="1"/>
</dbReference>
<dbReference type="SUPFAM" id="SSF52540">
    <property type="entry name" value="P-loop containing nucleoside triphosphate hydrolases"/>
    <property type="match status" value="1"/>
</dbReference>
<dbReference type="PROSITE" id="PS00152">
    <property type="entry name" value="ATPASE_ALPHA_BETA"/>
    <property type="match status" value="1"/>
</dbReference>
<sequence>MSSGRIIQIIGAVIDVEFERNSVPKIYDALQVDGTETTLEVQQQLGDGVVRTIAMGSTEGLKRGLNVTSTNAPISVPVGPATLGRIMDVLGRPIDEAGPVATEERLPIHRQAPSYAEQAASTDLLETGIKVIDLLCPFAKGGKVGLFGGAGVGKTVNMMELINNIAKAHSGLSVFAGVGERTREGNDFYHEMKDSNVLDKVAMVYGQMNEPPGNRLRVALTGLTMAEYFRDQKDENGKGRDVLLFVDNIYRYTLAGTEVSALLGRMPSAVGYQPTLAEEMGVLQERITSTKSGSITSIQAVYVPADDLTDPSPATTFAHLDATVVLSRDIASSGIYPAIDPLDSTSRQLDPLVVGQEHYEIARSVQNVLQRYKELKDIIAILGMDELAEEDKLVVYRARKIQRFFSQPFHVAEVFTGAPGKLVPLKETIRGFKGLLAGEYDHIPEQAFYMVGGIDEVIAKAEKL</sequence>
<feature type="chain" id="PRO_0000254197" description="ATP synthase subunit beta">
    <location>
        <begin position="1"/>
        <end position="464"/>
    </location>
</feature>
<feature type="binding site" evidence="1">
    <location>
        <begin position="148"/>
        <end position="155"/>
    </location>
    <ligand>
        <name>ATP</name>
        <dbReference type="ChEBI" id="CHEBI:30616"/>
    </ligand>
</feature>
<reference key="1">
    <citation type="journal article" date="2004" name="Nucleic Acids Res.">
        <title>Unique features revealed by the genome sequence of Acinetobacter sp. ADP1, a versatile and naturally transformation competent bacterium.</title>
        <authorList>
            <person name="Barbe V."/>
            <person name="Vallenet D."/>
            <person name="Fonknechten N."/>
            <person name="Kreimeyer A."/>
            <person name="Oztas S."/>
            <person name="Labarre L."/>
            <person name="Cruveiller S."/>
            <person name="Robert C."/>
            <person name="Duprat S."/>
            <person name="Wincker P."/>
            <person name="Ornston L.N."/>
            <person name="Weissenbach J."/>
            <person name="Marliere P."/>
            <person name="Cohen G.N."/>
            <person name="Medigue C."/>
        </authorList>
    </citation>
    <scope>NUCLEOTIDE SEQUENCE [LARGE SCALE GENOMIC DNA]</scope>
    <source>
        <strain>ATCC 33305 / BD413 / ADP1</strain>
    </source>
</reference>
<comment type="function">
    <text evidence="1">Produces ATP from ADP in the presence of a proton gradient across the membrane. The catalytic sites are hosted primarily by the beta subunits.</text>
</comment>
<comment type="catalytic activity">
    <reaction evidence="1">
        <text>ATP + H2O + 4 H(+)(in) = ADP + phosphate + 5 H(+)(out)</text>
        <dbReference type="Rhea" id="RHEA:57720"/>
        <dbReference type="ChEBI" id="CHEBI:15377"/>
        <dbReference type="ChEBI" id="CHEBI:15378"/>
        <dbReference type="ChEBI" id="CHEBI:30616"/>
        <dbReference type="ChEBI" id="CHEBI:43474"/>
        <dbReference type="ChEBI" id="CHEBI:456216"/>
        <dbReference type="EC" id="7.1.2.2"/>
    </reaction>
</comment>
<comment type="subunit">
    <text evidence="1">F-type ATPases have 2 components, CF(1) - the catalytic core - and CF(0) - the membrane proton channel. CF(1) has five subunits: alpha(3), beta(3), gamma(1), delta(1), epsilon(1). CF(0) has three main subunits: a(1), b(2) and c(9-12). The alpha and beta chains form an alternating ring which encloses part of the gamma chain. CF(1) is attached to CF(0) by a central stalk formed by the gamma and epsilon chains, while a peripheral stalk is formed by the delta and b chains.</text>
</comment>
<comment type="subcellular location">
    <subcellularLocation>
        <location evidence="1">Cell inner membrane</location>
        <topology evidence="1">Peripheral membrane protein</topology>
    </subcellularLocation>
</comment>
<comment type="similarity">
    <text evidence="1">Belongs to the ATPase alpha/beta chains family.</text>
</comment>
<evidence type="ECO:0000255" key="1">
    <source>
        <dbReference type="HAMAP-Rule" id="MF_01347"/>
    </source>
</evidence>